<comment type="function">
    <text evidence="1">Forms part of the ribosomal stalk which helps the ribosome interact with GTP-bound translation factors.</text>
</comment>
<comment type="subunit">
    <text evidence="1">Part of the ribosomal stalk of the 50S ribosomal subunit. Interacts with L10 and the large rRNA to form the base of the stalk. L10 forms an elongated spine to which L12 dimers bind in a sequential fashion forming a multimeric L10(L12)X complex.</text>
</comment>
<comment type="PTM">
    <text evidence="1">One or more lysine residues are methylated.</text>
</comment>
<comment type="similarity">
    <text evidence="1">Belongs to the universal ribosomal protein uL11 family.</text>
</comment>
<protein>
    <recommendedName>
        <fullName evidence="1">Large ribosomal subunit protein uL11</fullName>
    </recommendedName>
    <alternativeName>
        <fullName evidence="2">50S ribosomal protein L11</fullName>
    </alternativeName>
</protein>
<reference key="1">
    <citation type="journal article" date="2008" name="Proc. Natl. Acad. Sci. U.S.A.">
        <title>The genome of Clostridium kluyveri, a strict anaerobe with unique metabolic features.</title>
        <authorList>
            <person name="Seedorf H."/>
            <person name="Fricke W.F."/>
            <person name="Veith B."/>
            <person name="Brueggemann H."/>
            <person name="Liesegang H."/>
            <person name="Strittmatter A."/>
            <person name="Miethke M."/>
            <person name="Buckel W."/>
            <person name="Hinderberger J."/>
            <person name="Li F."/>
            <person name="Hagemeier C."/>
            <person name="Thauer R.K."/>
            <person name="Gottschalk G."/>
        </authorList>
    </citation>
    <scope>NUCLEOTIDE SEQUENCE [LARGE SCALE GENOMIC DNA]</scope>
    <source>
        <strain>ATCC 8527 / DSM 555 / NBRC 12016 / NCIMB 10680 / K1</strain>
    </source>
</reference>
<sequence length="141" mass="14777">MAKKVVGMIKLQLPAGKATPAPPVGPALGQHGVNIMGFCKEFNAKTVKQEGLIIPVVITVYQDRSFSFVLKTPPAAVLLKKAAGIESGSGVPNKTKVAKVTEEQVKQIAETKMVDLNASSVETAMKMIAGTARSMGITIEG</sequence>
<accession>A5N4N5</accession>
<dbReference type="EMBL" id="CP000673">
    <property type="protein sequence ID" value="EDK32266.1"/>
    <property type="molecule type" value="Genomic_DNA"/>
</dbReference>
<dbReference type="RefSeq" id="WP_011988792.1">
    <property type="nucleotide sequence ID" value="NC_009706.1"/>
</dbReference>
<dbReference type="SMR" id="A5N4N5"/>
<dbReference type="STRING" id="431943.CKL_0212"/>
<dbReference type="KEGG" id="ckl:CKL_0212"/>
<dbReference type="eggNOG" id="COG0080">
    <property type="taxonomic scope" value="Bacteria"/>
</dbReference>
<dbReference type="HOGENOM" id="CLU_074237_2_1_9"/>
<dbReference type="Proteomes" id="UP000002411">
    <property type="component" value="Chromosome"/>
</dbReference>
<dbReference type="GO" id="GO:0022625">
    <property type="term" value="C:cytosolic large ribosomal subunit"/>
    <property type="evidence" value="ECO:0007669"/>
    <property type="project" value="TreeGrafter"/>
</dbReference>
<dbReference type="GO" id="GO:0070180">
    <property type="term" value="F:large ribosomal subunit rRNA binding"/>
    <property type="evidence" value="ECO:0007669"/>
    <property type="project" value="UniProtKB-UniRule"/>
</dbReference>
<dbReference type="GO" id="GO:0003735">
    <property type="term" value="F:structural constituent of ribosome"/>
    <property type="evidence" value="ECO:0007669"/>
    <property type="project" value="InterPro"/>
</dbReference>
<dbReference type="GO" id="GO:0006412">
    <property type="term" value="P:translation"/>
    <property type="evidence" value="ECO:0007669"/>
    <property type="project" value="UniProtKB-UniRule"/>
</dbReference>
<dbReference type="CDD" id="cd00349">
    <property type="entry name" value="Ribosomal_L11"/>
    <property type="match status" value="1"/>
</dbReference>
<dbReference type="FunFam" id="1.10.10.250:FF:000001">
    <property type="entry name" value="50S ribosomal protein L11"/>
    <property type="match status" value="1"/>
</dbReference>
<dbReference type="FunFam" id="3.30.1550.10:FF:000001">
    <property type="entry name" value="50S ribosomal protein L11"/>
    <property type="match status" value="1"/>
</dbReference>
<dbReference type="Gene3D" id="1.10.10.250">
    <property type="entry name" value="Ribosomal protein L11, C-terminal domain"/>
    <property type="match status" value="1"/>
</dbReference>
<dbReference type="Gene3D" id="3.30.1550.10">
    <property type="entry name" value="Ribosomal protein L11/L12, N-terminal domain"/>
    <property type="match status" value="1"/>
</dbReference>
<dbReference type="HAMAP" id="MF_00736">
    <property type="entry name" value="Ribosomal_uL11"/>
    <property type="match status" value="1"/>
</dbReference>
<dbReference type="InterPro" id="IPR000911">
    <property type="entry name" value="Ribosomal_uL11"/>
</dbReference>
<dbReference type="InterPro" id="IPR006519">
    <property type="entry name" value="Ribosomal_uL11_bac-typ"/>
</dbReference>
<dbReference type="InterPro" id="IPR020783">
    <property type="entry name" value="Ribosomal_uL11_C"/>
</dbReference>
<dbReference type="InterPro" id="IPR036769">
    <property type="entry name" value="Ribosomal_uL11_C_sf"/>
</dbReference>
<dbReference type="InterPro" id="IPR020785">
    <property type="entry name" value="Ribosomal_uL11_CS"/>
</dbReference>
<dbReference type="InterPro" id="IPR020784">
    <property type="entry name" value="Ribosomal_uL11_N"/>
</dbReference>
<dbReference type="InterPro" id="IPR036796">
    <property type="entry name" value="Ribosomal_uL11_N_sf"/>
</dbReference>
<dbReference type="NCBIfam" id="TIGR01632">
    <property type="entry name" value="L11_bact"/>
    <property type="match status" value="1"/>
</dbReference>
<dbReference type="PANTHER" id="PTHR11661">
    <property type="entry name" value="60S RIBOSOMAL PROTEIN L12"/>
    <property type="match status" value="1"/>
</dbReference>
<dbReference type="PANTHER" id="PTHR11661:SF1">
    <property type="entry name" value="LARGE RIBOSOMAL SUBUNIT PROTEIN UL11M"/>
    <property type="match status" value="1"/>
</dbReference>
<dbReference type="Pfam" id="PF00298">
    <property type="entry name" value="Ribosomal_L11"/>
    <property type="match status" value="1"/>
</dbReference>
<dbReference type="Pfam" id="PF03946">
    <property type="entry name" value="Ribosomal_L11_N"/>
    <property type="match status" value="1"/>
</dbReference>
<dbReference type="SMART" id="SM00649">
    <property type="entry name" value="RL11"/>
    <property type="match status" value="1"/>
</dbReference>
<dbReference type="SUPFAM" id="SSF54747">
    <property type="entry name" value="Ribosomal L11/L12e N-terminal domain"/>
    <property type="match status" value="1"/>
</dbReference>
<dbReference type="SUPFAM" id="SSF46906">
    <property type="entry name" value="Ribosomal protein L11, C-terminal domain"/>
    <property type="match status" value="1"/>
</dbReference>
<dbReference type="PROSITE" id="PS00359">
    <property type="entry name" value="RIBOSOMAL_L11"/>
    <property type="match status" value="1"/>
</dbReference>
<organism>
    <name type="scientific">Clostridium kluyveri (strain ATCC 8527 / DSM 555 / NBRC 12016 / NCIMB 10680 / K1)</name>
    <dbReference type="NCBI Taxonomy" id="431943"/>
    <lineage>
        <taxon>Bacteria</taxon>
        <taxon>Bacillati</taxon>
        <taxon>Bacillota</taxon>
        <taxon>Clostridia</taxon>
        <taxon>Eubacteriales</taxon>
        <taxon>Clostridiaceae</taxon>
        <taxon>Clostridium</taxon>
    </lineage>
</organism>
<proteinExistence type="inferred from homology"/>
<evidence type="ECO:0000255" key="1">
    <source>
        <dbReference type="HAMAP-Rule" id="MF_00736"/>
    </source>
</evidence>
<evidence type="ECO:0000305" key="2"/>
<feature type="chain" id="PRO_1000083375" description="Large ribosomal subunit protein uL11">
    <location>
        <begin position="1"/>
        <end position="141"/>
    </location>
</feature>
<name>RL11_CLOK5</name>
<keyword id="KW-0488">Methylation</keyword>
<keyword id="KW-1185">Reference proteome</keyword>
<keyword id="KW-0687">Ribonucleoprotein</keyword>
<keyword id="KW-0689">Ribosomal protein</keyword>
<keyword id="KW-0694">RNA-binding</keyword>
<keyword id="KW-0699">rRNA-binding</keyword>
<gene>
    <name evidence="1" type="primary">rplK</name>
    <name type="ordered locus">CKL_0212</name>
</gene>